<name>HEM1_MICAN</name>
<evidence type="ECO:0000255" key="1">
    <source>
        <dbReference type="HAMAP-Rule" id="MF_00087"/>
    </source>
</evidence>
<feature type="chain" id="PRO_1000093151" description="Glutamyl-tRNA reductase">
    <location>
        <begin position="1"/>
        <end position="428"/>
    </location>
</feature>
<feature type="active site" description="Nucleophile" evidence="1">
    <location>
        <position position="50"/>
    </location>
</feature>
<feature type="binding site" evidence="1">
    <location>
        <begin position="49"/>
        <end position="52"/>
    </location>
    <ligand>
        <name>substrate</name>
    </ligand>
</feature>
<feature type="binding site" evidence="1">
    <location>
        <position position="109"/>
    </location>
    <ligand>
        <name>substrate</name>
    </ligand>
</feature>
<feature type="binding site" evidence="1">
    <location>
        <begin position="114"/>
        <end position="116"/>
    </location>
    <ligand>
        <name>substrate</name>
    </ligand>
</feature>
<feature type="binding site" evidence="1">
    <location>
        <position position="120"/>
    </location>
    <ligand>
        <name>substrate</name>
    </ligand>
</feature>
<feature type="binding site" evidence="1">
    <location>
        <begin position="189"/>
        <end position="194"/>
    </location>
    <ligand>
        <name>NADP(+)</name>
        <dbReference type="ChEBI" id="CHEBI:58349"/>
    </ligand>
</feature>
<feature type="site" description="Important for activity" evidence="1">
    <location>
        <position position="99"/>
    </location>
</feature>
<reference key="1">
    <citation type="journal article" date="2007" name="DNA Res.">
        <title>Complete genomic structure of the bloom-forming toxic cyanobacterium Microcystis aeruginosa NIES-843.</title>
        <authorList>
            <person name="Kaneko T."/>
            <person name="Nakajima N."/>
            <person name="Okamoto S."/>
            <person name="Suzuki I."/>
            <person name="Tanabe Y."/>
            <person name="Tamaoki M."/>
            <person name="Nakamura Y."/>
            <person name="Kasai F."/>
            <person name="Watanabe A."/>
            <person name="Kawashima K."/>
            <person name="Kishida Y."/>
            <person name="Ono A."/>
            <person name="Shimizu Y."/>
            <person name="Takahashi C."/>
            <person name="Minami C."/>
            <person name="Fujishiro T."/>
            <person name="Kohara M."/>
            <person name="Katoh M."/>
            <person name="Nakazaki N."/>
            <person name="Nakayama S."/>
            <person name="Yamada M."/>
            <person name="Tabata S."/>
            <person name="Watanabe M.M."/>
        </authorList>
    </citation>
    <scope>NUCLEOTIDE SEQUENCE [LARGE SCALE GENOMIC DNA]</scope>
    <source>
        <strain>NIES-843 / IAM M-247</strain>
    </source>
</reference>
<keyword id="KW-0149">Chlorophyll biosynthesis</keyword>
<keyword id="KW-0521">NADP</keyword>
<keyword id="KW-0560">Oxidoreductase</keyword>
<keyword id="KW-0627">Porphyrin biosynthesis</keyword>
<protein>
    <recommendedName>
        <fullName evidence="1">Glutamyl-tRNA reductase</fullName>
        <shortName evidence="1">GluTR</shortName>
        <ecNumber evidence="1">1.2.1.70</ecNumber>
    </recommendedName>
</protein>
<accession>B0JKN4</accession>
<organism>
    <name type="scientific">Microcystis aeruginosa (strain NIES-843 / IAM M-2473)</name>
    <dbReference type="NCBI Taxonomy" id="449447"/>
    <lineage>
        <taxon>Bacteria</taxon>
        <taxon>Bacillati</taxon>
        <taxon>Cyanobacteriota</taxon>
        <taxon>Cyanophyceae</taxon>
        <taxon>Oscillatoriophycideae</taxon>
        <taxon>Chroococcales</taxon>
        <taxon>Microcystaceae</taxon>
        <taxon>Microcystis</taxon>
    </lineage>
</organism>
<dbReference type="EC" id="1.2.1.70" evidence="1"/>
<dbReference type="EMBL" id="AP009552">
    <property type="protein sequence ID" value="BAG02823.1"/>
    <property type="molecule type" value="Genomic_DNA"/>
</dbReference>
<dbReference type="RefSeq" id="WP_012265993.1">
    <property type="nucleotide sequence ID" value="NC_010296.1"/>
</dbReference>
<dbReference type="SMR" id="B0JKN4"/>
<dbReference type="STRING" id="449447.MAE_30010"/>
<dbReference type="PaxDb" id="449447-MAE_30010"/>
<dbReference type="EnsemblBacteria" id="BAG02823">
    <property type="protein sequence ID" value="BAG02823"/>
    <property type="gene ID" value="MAE_30010"/>
</dbReference>
<dbReference type="KEGG" id="mar:MAE_30010"/>
<dbReference type="PATRIC" id="fig|449447.4.peg.2739"/>
<dbReference type="eggNOG" id="COG0373">
    <property type="taxonomic scope" value="Bacteria"/>
</dbReference>
<dbReference type="HOGENOM" id="CLU_035113_2_1_3"/>
<dbReference type="BioCyc" id="MAER449447:MAE_RS13095-MONOMER"/>
<dbReference type="UniPathway" id="UPA00251">
    <property type="reaction ID" value="UER00316"/>
</dbReference>
<dbReference type="UniPathway" id="UPA00668"/>
<dbReference type="Proteomes" id="UP000001510">
    <property type="component" value="Chromosome"/>
</dbReference>
<dbReference type="GO" id="GO:0008883">
    <property type="term" value="F:glutamyl-tRNA reductase activity"/>
    <property type="evidence" value="ECO:0007669"/>
    <property type="project" value="UniProtKB-UniRule"/>
</dbReference>
<dbReference type="GO" id="GO:0050661">
    <property type="term" value="F:NADP binding"/>
    <property type="evidence" value="ECO:0007669"/>
    <property type="project" value="InterPro"/>
</dbReference>
<dbReference type="GO" id="GO:0015995">
    <property type="term" value="P:chlorophyll biosynthetic process"/>
    <property type="evidence" value="ECO:0007669"/>
    <property type="project" value="UniProtKB-UniRule"/>
</dbReference>
<dbReference type="GO" id="GO:0006782">
    <property type="term" value="P:protoporphyrinogen IX biosynthetic process"/>
    <property type="evidence" value="ECO:0007669"/>
    <property type="project" value="UniProtKB-UniRule"/>
</dbReference>
<dbReference type="CDD" id="cd05213">
    <property type="entry name" value="NAD_bind_Glutamyl_tRNA_reduct"/>
    <property type="match status" value="1"/>
</dbReference>
<dbReference type="FunFam" id="3.30.460.30:FF:000001">
    <property type="entry name" value="Glutamyl-tRNA reductase"/>
    <property type="match status" value="1"/>
</dbReference>
<dbReference type="FunFam" id="3.40.50.720:FF:000031">
    <property type="entry name" value="Glutamyl-tRNA reductase"/>
    <property type="match status" value="1"/>
</dbReference>
<dbReference type="Gene3D" id="3.30.460.30">
    <property type="entry name" value="Glutamyl-tRNA reductase, N-terminal domain"/>
    <property type="match status" value="1"/>
</dbReference>
<dbReference type="Gene3D" id="3.40.50.720">
    <property type="entry name" value="NAD(P)-binding Rossmann-like Domain"/>
    <property type="match status" value="1"/>
</dbReference>
<dbReference type="HAMAP" id="MF_00087">
    <property type="entry name" value="Glu_tRNA_reductase"/>
    <property type="match status" value="1"/>
</dbReference>
<dbReference type="InterPro" id="IPR000343">
    <property type="entry name" value="4pyrrol_synth_GluRdtase"/>
</dbReference>
<dbReference type="InterPro" id="IPR015896">
    <property type="entry name" value="4pyrrol_synth_GluRdtase_dimer"/>
</dbReference>
<dbReference type="InterPro" id="IPR015895">
    <property type="entry name" value="4pyrrol_synth_GluRdtase_N"/>
</dbReference>
<dbReference type="InterPro" id="IPR018214">
    <property type="entry name" value="GluRdtase_CS"/>
</dbReference>
<dbReference type="InterPro" id="IPR036453">
    <property type="entry name" value="GluRdtase_dimer_dom_sf"/>
</dbReference>
<dbReference type="InterPro" id="IPR036343">
    <property type="entry name" value="GluRdtase_N_sf"/>
</dbReference>
<dbReference type="InterPro" id="IPR036291">
    <property type="entry name" value="NAD(P)-bd_dom_sf"/>
</dbReference>
<dbReference type="InterPro" id="IPR006151">
    <property type="entry name" value="Shikm_DH/Glu-tRNA_Rdtase"/>
</dbReference>
<dbReference type="NCBIfam" id="TIGR01035">
    <property type="entry name" value="hemA"/>
    <property type="match status" value="1"/>
</dbReference>
<dbReference type="NCBIfam" id="NF000744">
    <property type="entry name" value="PRK00045.1-3"/>
    <property type="match status" value="1"/>
</dbReference>
<dbReference type="PANTHER" id="PTHR43120">
    <property type="entry name" value="GLUTAMYL-TRNA REDUCTASE 1, CHLOROPLASTIC"/>
    <property type="match status" value="1"/>
</dbReference>
<dbReference type="PANTHER" id="PTHR43120:SF1">
    <property type="entry name" value="GLUTAMYL-TRNA REDUCTASE 1, CHLOROPLASTIC"/>
    <property type="match status" value="1"/>
</dbReference>
<dbReference type="Pfam" id="PF00745">
    <property type="entry name" value="GlutR_dimer"/>
    <property type="match status" value="1"/>
</dbReference>
<dbReference type="Pfam" id="PF05201">
    <property type="entry name" value="GlutR_N"/>
    <property type="match status" value="1"/>
</dbReference>
<dbReference type="Pfam" id="PF01488">
    <property type="entry name" value="Shikimate_DH"/>
    <property type="match status" value="1"/>
</dbReference>
<dbReference type="PIRSF" id="PIRSF000445">
    <property type="entry name" value="4pyrrol_synth_GluRdtase"/>
    <property type="match status" value="1"/>
</dbReference>
<dbReference type="SUPFAM" id="SSF69742">
    <property type="entry name" value="Glutamyl tRNA-reductase catalytic, N-terminal domain"/>
    <property type="match status" value="1"/>
</dbReference>
<dbReference type="SUPFAM" id="SSF69075">
    <property type="entry name" value="Glutamyl tRNA-reductase dimerization domain"/>
    <property type="match status" value="1"/>
</dbReference>
<dbReference type="SUPFAM" id="SSF51735">
    <property type="entry name" value="NAD(P)-binding Rossmann-fold domains"/>
    <property type="match status" value="1"/>
</dbReference>
<dbReference type="PROSITE" id="PS00747">
    <property type="entry name" value="GLUTR"/>
    <property type="match status" value="1"/>
</dbReference>
<sequence length="428" mass="47653">MNIAVVGLSHKTAPVEIREKLSIPEAKIESALTHLKGYPHIQEVAIISTCNRLEIYAVVTDTEKGVVEITQFLAEIGHIPLNVLRRYLFTLLHQDAVRHLLRVSAGLESLVLGEGQILAQVKNTHKLAQKYNTISQLLDRLFKQAMTAGKRVRTETSIGTGAVSISSAAVELAHAKVTDLSSKKIAIIGAGKMSRLLVTHLLAKGSQQIAIINRSQRRAQELAREFPHLPLQLYGLEEMMTTVAASDIVFTSTGATEPILTKTLLTEVTITANSLMLIDISVPRNVHTDVKELAQVQAFNVDDLKAVVAANQESRRQMAREAEALLEQEVEAFELWWRSLDTVPTISCLRSKIEDIREQELEKALSRLGTEFAEKHQEVIEAMTRGIVNKILHEPMVQLRAQQDIEARKRCLQSLQMLFNLSVGEEYS</sequence>
<proteinExistence type="inferred from homology"/>
<gene>
    <name evidence="1" type="primary">hemA</name>
    <name type="ordered locus">MAE_30010</name>
</gene>
<comment type="function">
    <text evidence="1">Catalyzes the NADPH-dependent reduction of glutamyl-tRNA(Glu) to glutamate 1-semialdehyde (GSA).</text>
</comment>
<comment type="catalytic activity">
    <reaction evidence="1">
        <text>(S)-4-amino-5-oxopentanoate + tRNA(Glu) + NADP(+) = L-glutamyl-tRNA(Glu) + NADPH + H(+)</text>
        <dbReference type="Rhea" id="RHEA:12344"/>
        <dbReference type="Rhea" id="RHEA-COMP:9663"/>
        <dbReference type="Rhea" id="RHEA-COMP:9680"/>
        <dbReference type="ChEBI" id="CHEBI:15378"/>
        <dbReference type="ChEBI" id="CHEBI:57501"/>
        <dbReference type="ChEBI" id="CHEBI:57783"/>
        <dbReference type="ChEBI" id="CHEBI:58349"/>
        <dbReference type="ChEBI" id="CHEBI:78442"/>
        <dbReference type="ChEBI" id="CHEBI:78520"/>
        <dbReference type="EC" id="1.2.1.70"/>
    </reaction>
</comment>
<comment type="pathway">
    <text evidence="1">Porphyrin-containing compound metabolism; protoporphyrin-IX biosynthesis; 5-aminolevulinate from L-glutamyl-tRNA(Glu): step 1/2.</text>
</comment>
<comment type="pathway">
    <text evidence="1">Porphyrin-containing compound metabolism; chlorophyll biosynthesis.</text>
</comment>
<comment type="subunit">
    <text evidence="1">Homodimer.</text>
</comment>
<comment type="domain">
    <text evidence="1">Possesses an unusual extended V-shaped dimeric structure with each monomer consisting of three distinct domains arranged along a curved 'spinal' alpha-helix. The N-terminal catalytic domain specifically recognizes the glutamate moiety of the substrate. The second domain is the NADPH-binding domain, and the third C-terminal domain is responsible for dimerization.</text>
</comment>
<comment type="miscellaneous">
    <text evidence="1">During catalysis, the active site Cys acts as a nucleophile attacking the alpha-carbonyl group of tRNA-bound glutamate with the formation of a thioester intermediate between enzyme and glutamate, and the concomitant release of tRNA(Glu). The thioester intermediate is finally reduced by direct hydride transfer from NADPH, to form the product GSA.</text>
</comment>
<comment type="similarity">
    <text evidence="1">Belongs to the glutamyl-tRNA reductase family.</text>
</comment>